<keyword id="KW-0539">Nucleus</keyword>
<keyword id="KW-1185">Reference proteome</keyword>
<keyword id="KW-0677">Repeat</keyword>
<keyword id="KW-0687">Ribonucleoprotein</keyword>
<keyword id="KW-0690">Ribosome biogenesis</keyword>
<keyword id="KW-0694">RNA-binding</keyword>
<keyword id="KW-0698">rRNA processing</keyword>
<evidence type="ECO:0000250" key="1">
    <source>
        <dbReference type="UniProtKB" id="P28007"/>
    </source>
</evidence>
<evidence type="ECO:0000256" key="2">
    <source>
        <dbReference type="SAM" id="MobiDB-lite"/>
    </source>
</evidence>
<evidence type="ECO:0000305" key="3"/>
<accession>Q6CJ45</accession>
<proteinExistence type="inferred from homology"/>
<sequence length="219" mass="22169">MSFRGGNRGSRGGFRGNSRGGFGGRAAPQGPPDSVLEMGAFLHPCEGDIVCRSINTKIPYFNAPIYLENKTQVGKVDEILGPLNEVFFTVKCSDGVKAESFSEGDKFYIAPDKLLPIERFLPKPKVAGPPKPKRKRSGAPGGRGGFGGGRGGARGGSRGGFGGGRGGSRGGFGGSRGGFSGGRGGFSGGSRGGSRGGSRGGFGGSRGGSRGGFGGGRRF</sequence>
<protein>
    <recommendedName>
        <fullName>H/ACA ribonucleoprotein complex subunit GAR1</fullName>
    </recommendedName>
    <alternativeName>
        <fullName>snoRNP protein GAR1</fullName>
    </alternativeName>
</protein>
<gene>
    <name type="primary">GAR1</name>
    <name type="ordered locus">KLLA0F21604g</name>
</gene>
<name>GAR1_KLULA</name>
<reference key="1">
    <citation type="journal article" date="2004" name="Nature">
        <title>Genome evolution in yeasts.</title>
        <authorList>
            <person name="Dujon B."/>
            <person name="Sherman D."/>
            <person name="Fischer G."/>
            <person name="Durrens P."/>
            <person name="Casaregola S."/>
            <person name="Lafontaine I."/>
            <person name="de Montigny J."/>
            <person name="Marck C."/>
            <person name="Neuveglise C."/>
            <person name="Talla E."/>
            <person name="Goffard N."/>
            <person name="Frangeul L."/>
            <person name="Aigle M."/>
            <person name="Anthouard V."/>
            <person name="Babour A."/>
            <person name="Barbe V."/>
            <person name="Barnay S."/>
            <person name="Blanchin S."/>
            <person name="Beckerich J.-M."/>
            <person name="Beyne E."/>
            <person name="Bleykasten C."/>
            <person name="Boisrame A."/>
            <person name="Boyer J."/>
            <person name="Cattolico L."/>
            <person name="Confanioleri F."/>
            <person name="de Daruvar A."/>
            <person name="Despons L."/>
            <person name="Fabre E."/>
            <person name="Fairhead C."/>
            <person name="Ferry-Dumazet H."/>
            <person name="Groppi A."/>
            <person name="Hantraye F."/>
            <person name="Hennequin C."/>
            <person name="Jauniaux N."/>
            <person name="Joyet P."/>
            <person name="Kachouri R."/>
            <person name="Kerrest A."/>
            <person name="Koszul R."/>
            <person name="Lemaire M."/>
            <person name="Lesur I."/>
            <person name="Ma L."/>
            <person name="Muller H."/>
            <person name="Nicaud J.-M."/>
            <person name="Nikolski M."/>
            <person name="Oztas S."/>
            <person name="Ozier-Kalogeropoulos O."/>
            <person name="Pellenz S."/>
            <person name="Potier S."/>
            <person name="Richard G.-F."/>
            <person name="Straub M.-L."/>
            <person name="Suleau A."/>
            <person name="Swennen D."/>
            <person name="Tekaia F."/>
            <person name="Wesolowski-Louvel M."/>
            <person name="Westhof E."/>
            <person name="Wirth B."/>
            <person name="Zeniou-Meyer M."/>
            <person name="Zivanovic Y."/>
            <person name="Bolotin-Fukuhara M."/>
            <person name="Thierry A."/>
            <person name="Bouchier C."/>
            <person name="Caudron B."/>
            <person name="Scarpelli C."/>
            <person name="Gaillardin C."/>
            <person name="Weissenbach J."/>
            <person name="Wincker P."/>
            <person name="Souciet J.-L."/>
        </authorList>
    </citation>
    <scope>NUCLEOTIDE SEQUENCE [LARGE SCALE GENOMIC DNA]</scope>
    <source>
        <strain>ATCC 8585 / CBS 2359 / DSM 70799 / NBRC 1267 / NRRL Y-1140 / WM37</strain>
    </source>
</reference>
<feature type="chain" id="PRO_0000327529" description="H/ACA ribonucleoprotein complex subunit GAR1">
    <location>
        <begin position="1"/>
        <end position="219"/>
    </location>
</feature>
<feature type="region of interest" description="Disordered" evidence="2">
    <location>
        <begin position="1"/>
        <end position="29"/>
    </location>
</feature>
<feature type="region of interest" description="RGG-box 1">
    <location>
        <begin position="4"/>
        <end position="24"/>
    </location>
</feature>
<feature type="region of interest" description="Disordered" evidence="2">
    <location>
        <begin position="120"/>
        <end position="219"/>
    </location>
</feature>
<feature type="region of interest" description="RGG-box 2">
    <location>
        <begin position="143"/>
        <end position="212"/>
    </location>
</feature>
<feature type="compositionally biased region" description="Gly residues" evidence="2">
    <location>
        <begin position="1"/>
        <end position="24"/>
    </location>
</feature>
<feature type="compositionally biased region" description="Gly residues" evidence="2">
    <location>
        <begin position="139"/>
        <end position="219"/>
    </location>
</feature>
<comment type="function">
    <text evidence="1">Non-catalytic component of the H/ACA small nucleolar ribonucleoprotein (H/ACA snoRNP), which catalyzes pseudouridylation of rRNA and is required for ribosome biogenesis. This involves the isomerization of uridine such that the ribose is subsequently attached to C5, instead of the normal N1. Pseudouridine ('psi') residues may serve to stabilize the conformation of rRNAs. The H/ACA snoRNP complex also mediates pseudouridylation of other types of RNAs. The H/ACA snoRNP complex mediates pseudouridylation at position 93 in U2 snRNA.</text>
</comment>
<comment type="subunit">
    <text evidence="1">Component of the small nucleolar ribonucleoprotein particles containing H/ACA-type snoRNAs (H/ACA snoRNPs).</text>
</comment>
<comment type="subcellular location">
    <subcellularLocation>
        <location evidence="1">Nucleus</location>
        <location evidence="1">Nucleolus</location>
    </subcellularLocation>
</comment>
<comment type="similarity">
    <text evidence="3">Belongs to the GAR1 family.</text>
</comment>
<organism>
    <name type="scientific">Kluyveromyces lactis (strain ATCC 8585 / CBS 2359 / DSM 70799 / NBRC 1267 / NRRL Y-1140 / WM37)</name>
    <name type="common">Yeast</name>
    <name type="synonym">Candida sphaerica</name>
    <dbReference type="NCBI Taxonomy" id="284590"/>
    <lineage>
        <taxon>Eukaryota</taxon>
        <taxon>Fungi</taxon>
        <taxon>Dikarya</taxon>
        <taxon>Ascomycota</taxon>
        <taxon>Saccharomycotina</taxon>
        <taxon>Saccharomycetes</taxon>
        <taxon>Saccharomycetales</taxon>
        <taxon>Saccharomycetaceae</taxon>
        <taxon>Kluyveromyces</taxon>
    </lineage>
</organism>
<dbReference type="EMBL" id="CR382126">
    <property type="protein sequence ID" value="CAG98752.1"/>
    <property type="molecule type" value="Genomic_DNA"/>
</dbReference>
<dbReference type="RefSeq" id="XP_456044.1">
    <property type="nucleotide sequence ID" value="XM_456044.1"/>
</dbReference>
<dbReference type="SMR" id="Q6CJ45"/>
<dbReference type="FunCoup" id="Q6CJ45">
    <property type="interactions" value="664"/>
</dbReference>
<dbReference type="STRING" id="284590.Q6CJ45"/>
<dbReference type="PaxDb" id="284590-Q6CJ45"/>
<dbReference type="KEGG" id="kla:KLLA0_F21604g"/>
<dbReference type="eggNOG" id="KOG3262">
    <property type="taxonomic scope" value="Eukaryota"/>
</dbReference>
<dbReference type="HOGENOM" id="CLU_080002_1_0_1"/>
<dbReference type="InParanoid" id="Q6CJ45"/>
<dbReference type="OMA" id="KPQDGIV"/>
<dbReference type="Proteomes" id="UP000000598">
    <property type="component" value="Chromosome F"/>
</dbReference>
<dbReference type="GO" id="GO:0031429">
    <property type="term" value="C:box H/ACA snoRNP complex"/>
    <property type="evidence" value="ECO:0007669"/>
    <property type="project" value="TreeGrafter"/>
</dbReference>
<dbReference type="GO" id="GO:0034513">
    <property type="term" value="F:box H/ACA snoRNA binding"/>
    <property type="evidence" value="ECO:0007669"/>
    <property type="project" value="TreeGrafter"/>
</dbReference>
<dbReference type="GO" id="GO:0000454">
    <property type="term" value="P:snoRNA guided rRNA pseudouridine synthesis"/>
    <property type="evidence" value="ECO:0007669"/>
    <property type="project" value="TreeGrafter"/>
</dbReference>
<dbReference type="FunFam" id="2.40.10.230:FF:000001">
    <property type="entry name" value="H/ACA ribonucleoprotein complex subunit"/>
    <property type="match status" value="1"/>
</dbReference>
<dbReference type="Gene3D" id="2.40.10.230">
    <property type="entry name" value="Probable tRNA pseudouridine synthase domain"/>
    <property type="match status" value="1"/>
</dbReference>
<dbReference type="InterPro" id="IPR038664">
    <property type="entry name" value="Gar1/Naf1_Cbf5-bd_sf"/>
</dbReference>
<dbReference type="InterPro" id="IPR007504">
    <property type="entry name" value="H/ACA_rnp_Gar1/Naf1"/>
</dbReference>
<dbReference type="InterPro" id="IPR009000">
    <property type="entry name" value="Transl_B-barrel_sf"/>
</dbReference>
<dbReference type="PANTHER" id="PTHR23237:SF6">
    <property type="entry name" value="H_ACA RIBONUCLEOPROTEIN COMPLEX SUBUNIT 1"/>
    <property type="match status" value="1"/>
</dbReference>
<dbReference type="PANTHER" id="PTHR23237">
    <property type="entry name" value="NUCLEOLAR PROTEIN FAMILY A MEMBER 1 SNORNP PROTEIN GAR1"/>
    <property type="match status" value="1"/>
</dbReference>
<dbReference type="Pfam" id="PF04410">
    <property type="entry name" value="Gar1"/>
    <property type="match status" value="1"/>
</dbReference>
<dbReference type="SUPFAM" id="SSF50447">
    <property type="entry name" value="Translation proteins"/>
    <property type="match status" value="1"/>
</dbReference>